<sequence length="188" mass="20428">MLPLYVVNNYGQFNHLILRALRDLDIDAKLIPNTTPVSEVREGCQGIILGGGPDISRAGLSHEYVRLGKPVLGICLGLHVIAQEFGGTVQSGQKGGYGAVEVTITDHDGILQGYPQTMQVWASHADEVVTLPGDFDRLATSSICGNEAIAHKHLPIFGIQWHPEVSHTFEGHRVFENFFSICTGQNKG</sequence>
<dbReference type="EC" id="6.3.5.2" evidence="1"/>
<dbReference type="EMBL" id="CP000254">
    <property type="protein sequence ID" value="ABD41319.1"/>
    <property type="molecule type" value="Genomic_DNA"/>
</dbReference>
<dbReference type="RefSeq" id="WP_011448584.1">
    <property type="nucleotide sequence ID" value="NC_007796.1"/>
</dbReference>
<dbReference type="SMR" id="Q2FL30"/>
<dbReference type="FunCoup" id="Q2FL30">
    <property type="interactions" value="25"/>
</dbReference>
<dbReference type="STRING" id="323259.Mhun_1588"/>
<dbReference type="MEROPS" id="C26.A31"/>
<dbReference type="EnsemblBacteria" id="ABD41319">
    <property type="protein sequence ID" value="ABD41319"/>
    <property type="gene ID" value="Mhun_1588"/>
</dbReference>
<dbReference type="GeneID" id="3923844"/>
<dbReference type="KEGG" id="mhu:Mhun_1588"/>
<dbReference type="eggNOG" id="arCOG00087">
    <property type="taxonomic scope" value="Archaea"/>
</dbReference>
<dbReference type="HOGENOM" id="CLU_014340_1_4_2"/>
<dbReference type="InParanoid" id="Q2FL30"/>
<dbReference type="OrthoDB" id="10772at2157"/>
<dbReference type="UniPathway" id="UPA00189">
    <property type="reaction ID" value="UER00296"/>
</dbReference>
<dbReference type="Proteomes" id="UP000001941">
    <property type="component" value="Chromosome"/>
</dbReference>
<dbReference type="GO" id="GO:0005829">
    <property type="term" value="C:cytosol"/>
    <property type="evidence" value="ECO:0007669"/>
    <property type="project" value="TreeGrafter"/>
</dbReference>
<dbReference type="GO" id="GO:0005524">
    <property type="term" value="F:ATP binding"/>
    <property type="evidence" value="ECO:0007669"/>
    <property type="project" value="UniProtKB-KW"/>
</dbReference>
<dbReference type="GO" id="GO:0003921">
    <property type="term" value="F:GMP synthase activity"/>
    <property type="evidence" value="ECO:0007669"/>
    <property type="project" value="TreeGrafter"/>
</dbReference>
<dbReference type="CDD" id="cd01742">
    <property type="entry name" value="GATase1_GMP_Synthase"/>
    <property type="match status" value="1"/>
</dbReference>
<dbReference type="FunFam" id="3.40.50.880:FF:000047">
    <property type="entry name" value="GMP synthase [glutamine-hydrolyzing] subunit A"/>
    <property type="match status" value="1"/>
</dbReference>
<dbReference type="Gene3D" id="3.40.50.880">
    <property type="match status" value="1"/>
</dbReference>
<dbReference type="HAMAP" id="MF_01510">
    <property type="entry name" value="GMP_synthase_A"/>
    <property type="match status" value="1"/>
</dbReference>
<dbReference type="InterPro" id="IPR029062">
    <property type="entry name" value="Class_I_gatase-like"/>
</dbReference>
<dbReference type="InterPro" id="IPR017926">
    <property type="entry name" value="GATASE"/>
</dbReference>
<dbReference type="InterPro" id="IPR004739">
    <property type="entry name" value="GMP_synth_GATase"/>
</dbReference>
<dbReference type="InterPro" id="IPR023686">
    <property type="entry name" value="GMP_synthase_A"/>
</dbReference>
<dbReference type="NCBIfam" id="TIGR00888">
    <property type="entry name" value="guaA_Nterm"/>
    <property type="match status" value="1"/>
</dbReference>
<dbReference type="NCBIfam" id="NF001975">
    <property type="entry name" value="PRK00758.1"/>
    <property type="match status" value="1"/>
</dbReference>
<dbReference type="PANTHER" id="PTHR11922:SF2">
    <property type="entry name" value="GMP SYNTHASE [GLUTAMINE-HYDROLYZING]"/>
    <property type="match status" value="1"/>
</dbReference>
<dbReference type="PANTHER" id="PTHR11922">
    <property type="entry name" value="GMP SYNTHASE-RELATED"/>
    <property type="match status" value="1"/>
</dbReference>
<dbReference type="Pfam" id="PF00117">
    <property type="entry name" value="GATase"/>
    <property type="match status" value="1"/>
</dbReference>
<dbReference type="PRINTS" id="PR00097">
    <property type="entry name" value="ANTSNTHASEII"/>
</dbReference>
<dbReference type="PRINTS" id="PR00096">
    <property type="entry name" value="GATASE"/>
</dbReference>
<dbReference type="SUPFAM" id="SSF52317">
    <property type="entry name" value="Class I glutamine amidotransferase-like"/>
    <property type="match status" value="1"/>
</dbReference>
<dbReference type="PROSITE" id="PS51273">
    <property type="entry name" value="GATASE_TYPE_1"/>
    <property type="match status" value="1"/>
</dbReference>
<gene>
    <name evidence="1" type="primary">guaAA</name>
    <name type="ordered locus">Mhun_1588</name>
</gene>
<accession>Q2FL30</accession>
<keyword id="KW-0067">ATP-binding</keyword>
<keyword id="KW-0315">Glutamine amidotransferase</keyword>
<keyword id="KW-0332">GMP biosynthesis</keyword>
<keyword id="KW-0436">Ligase</keyword>
<keyword id="KW-0547">Nucleotide-binding</keyword>
<keyword id="KW-0658">Purine biosynthesis</keyword>
<keyword id="KW-1185">Reference proteome</keyword>
<evidence type="ECO:0000255" key="1">
    <source>
        <dbReference type="HAMAP-Rule" id="MF_01510"/>
    </source>
</evidence>
<reference key="1">
    <citation type="journal article" date="2016" name="Stand. Genomic Sci.">
        <title>Complete genome sequence of Methanospirillum hungatei type strain JF1.</title>
        <authorList>
            <person name="Gunsalus R.P."/>
            <person name="Cook L.E."/>
            <person name="Crable B."/>
            <person name="Rohlin L."/>
            <person name="McDonald E."/>
            <person name="Mouttaki H."/>
            <person name="Sieber J.R."/>
            <person name="Poweleit N."/>
            <person name="Zhou H."/>
            <person name="Lapidus A.L."/>
            <person name="Daligault H.E."/>
            <person name="Land M."/>
            <person name="Gilna P."/>
            <person name="Ivanova N."/>
            <person name="Kyrpides N."/>
            <person name="Culley D.E."/>
            <person name="McInerney M.J."/>
        </authorList>
    </citation>
    <scope>NUCLEOTIDE SEQUENCE [LARGE SCALE GENOMIC DNA]</scope>
    <source>
        <strain>ATCC 27890 / DSM 864 / NBRC 100397 / JF-1</strain>
    </source>
</reference>
<protein>
    <recommendedName>
        <fullName evidence="1">GMP synthase [glutamine-hydrolyzing] subunit A</fullName>
        <ecNumber evidence="1">6.3.5.2</ecNumber>
    </recommendedName>
    <alternativeName>
        <fullName evidence="1">Glutamine amidotransferase</fullName>
    </alternativeName>
</protein>
<proteinExistence type="inferred from homology"/>
<organism>
    <name type="scientific">Methanospirillum hungatei JF-1 (strain ATCC 27890 / DSM 864 / NBRC 100397 / JF-1)</name>
    <dbReference type="NCBI Taxonomy" id="323259"/>
    <lineage>
        <taxon>Archaea</taxon>
        <taxon>Methanobacteriati</taxon>
        <taxon>Methanobacteriota</taxon>
        <taxon>Stenosarchaea group</taxon>
        <taxon>Methanomicrobia</taxon>
        <taxon>Methanomicrobiales</taxon>
        <taxon>Methanospirillaceae</taxon>
        <taxon>Methanospirillum</taxon>
    </lineage>
</organism>
<feature type="chain" id="PRO_0000294268" description="GMP synthase [glutamine-hydrolyzing] subunit A">
    <location>
        <begin position="1"/>
        <end position="188"/>
    </location>
</feature>
<feature type="domain" description="Glutamine amidotransferase type-1" evidence="1">
    <location>
        <begin position="3"/>
        <end position="188"/>
    </location>
</feature>
<feature type="active site" description="Nucleophile" evidence="1">
    <location>
        <position position="75"/>
    </location>
</feature>
<feature type="active site" evidence="1">
    <location>
        <position position="162"/>
    </location>
</feature>
<feature type="active site" evidence="1">
    <location>
        <position position="164"/>
    </location>
</feature>
<comment type="function">
    <text evidence="1">Catalyzes the synthesis of GMP from XMP.</text>
</comment>
<comment type="catalytic activity">
    <reaction evidence="1">
        <text>XMP + L-glutamine + ATP + H2O = GMP + L-glutamate + AMP + diphosphate + 2 H(+)</text>
        <dbReference type="Rhea" id="RHEA:11680"/>
        <dbReference type="ChEBI" id="CHEBI:15377"/>
        <dbReference type="ChEBI" id="CHEBI:15378"/>
        <dbReference type="ChEBI" id="CHEBI:29985"/>
        <dbReference type="ChEBI" id="CHEBI:30616"/>
        <dbReference type="ChEBI" id="CHEBI:33019"/>
        <dbReference type="ChEBI" id="CHEBI:57464"/>
        <dbReference type="ChEBI" id="CHEBI:58115"/>
        <dbReference type="ChEBI" id="CHEBI:58359"/>
        <dbReference type="ChEBI" id="CHEBI:456215"/>
        <dbReference type="EC" id="6.3.5.2"/>
    </reaction>
</comment>
<comment type="pathway">
    <text evidence="1">Purine metabolism; GMP biosynthesis; GMP from XMP (L-Gln route): step 1/1.</text>
</comment>
<comment type="subunit">
    <text evidence="1">Heterodimer composed of a glutamine amidotransferase subunit (A) and a GMP-binding subunit (B).</text>
</comment>
<name>GUAAA_METHJ</name>